<name>MSBA_XANAC</name>
<accession>Q8PKS5</accession>
<protein>
    <recommendedName>
        <fullName evidence="1">ATP-dependent lipid A-core flippase</fullName>
        <ecNumber evidence="1">7.5.2.6</ecNumber>
    </recommendedName>
    <alternativeName>
        <fullName evidence="1">Lipid A export ATP-binding/permease protein MsbA</fullName>
    </alternativeName>
</protein>
<dbReference type="EC" id="7.5.2.6" evidence="1"/>
<dbReference type="EMBL" id="AE008923">
    <property type="protein sequence ID" value="AAM36944.1"/>
    <property type="molecule type" value="Genomic_DNA"/>
</dbReference>
<dbReference type="RefSeq" id="WP_011051324.1">
    <property type="nucleotide sequence ID" value="NC_003919.1"/>
</dbReference>
<dbReference type="SMR" id="Q8PKS5"/>
<dbReference type="GeneID" id="66911222"/>
<dbReference type="KEGG" id="xac:XAC2087"/>
<dbReference type="eggNOG" id="COG1132">
    <property type="taxonomic scope" value="Bacteria"/>
</dbReference>
<dbReference type="HOGENOM" id="CLU_000604_84_3_6"/>
<dbReference type="Proteomes" id="UP000000576">
    <property type="component" value="Chromosome"/>
</dbReference>
<dbReference type="GO" id="GO:0005886">
    <property type="term" value="C:plasma membrane"/>
    <property type="evidence" value="ECO:0007669"/>
    <property type="project" value="UniProtKB-SubCell"/>
</dbReference>
<dbReference type="GO" id="GO:0015421">
    <property type="term" value="F:ABC-type oligopeptide transporter activity"/>
    <property type="evidence" value="ECO:0007669"/>
    <property type="project" value="TreeGrafter"/>
</dbReference>
<dbReference type="GO" id="GO:0005524">
    <property type="term" value="F:ATP binding"/>
    <property type="evidence" value="ECO:0007669"/>
    <property type="project" value="UniProtKB-KW"/>
</dbReference>
<dbReference type="GO" id="GO:0016887">
    <property type="term" value="F:ATP hydrolysis activity"/>
    <property type="evidence" value="ECO:0007669"/>
    <property type="project" value="InterPro"/>
</dbReference>
<dbReference type="GO" id="GO:0034040">
    <property type="term" value="F:ATPase-coupled lipid transmembrane transporter activity"/>
    <property type="evidence" value="ECO:0007669"/>
    <property type="project" value="InterPro"/>
</dbReference>
<dbReference type="CDD" id="cd18552">
    <property type="entry name" value="ABC_6TM_MsbA_like"/>
    <property type="match status" value="1"/>
</dbReference>
<dbReference type="FunFam" id="1.20.1560.10:FF:000103">
    <property type="entry name" value="Lipid A export ATP-binding/permease protein MsbA"/>
    <property type="match status" value="1"/>
</dbReference>
<dbReference type="FunFam" id="3.40.50.300:FF:000221">
    <property type="entry name" value="Multidrug ABC transporter ATP-binding protein"/>
    <property type="match status" value="1"/>
</dbReference>
<dbReference type="Gene3D" id="1.20.1560.10">
    <property type="entry name" value="ABC transporter type 1, transmembrane domain"/>
    <property type="match status" value="1"/>
</dbReference>
<dbReference type="Gene3D" id="3.40.50.300">
    <property type="entry name" value="P-loop containing nucleotide triphosphate hydrolases"/>
    <property type="match status" value="1"/>
</dbReference>
<dbReference type="InterPro" id="IPR003593">
    <property type="entry name" value="AAA+_ATPase"/>
</dbReference>
<dbReference type="InterPro" id="IPR011527">
    <property type="entry name" value="ABC1_TM_dom"/>
</dbReference>
<dbReference type="InterPro" id="IPR036640">
    <property type="entry name" value="ABC1_TM_sf"/>
</dbReference>
<dbReference type="InterPro" id="IPR003439">
    <property type="entry name" value="ABC_transporter-like_ATP-bd"/>
</dbReference>
<dbReference type="InterPro" id="IPR017871">
    <property type="entry name" value="ABC_transporter-like_CS"/>
</dbReference>
<dbReference type="InterPro" id="IPR011917">
    <property type="entry name" value="ABC_transpr_lipidA"/>
</dbReference>
<dbReference type="InterPro" id="IPR027417">
    <property type="entry name" value="P-loop_NTPase"/>
</dbReference>
<dbReference type="InterPro" id="IPR039421">
    <property type="entry name" value="Type_1_exporter"/>
</dbReference>
<dbReference type="NCBIfam" id="TIGR02203">
    <property type="entry name" value="MsbA_lipidA"/>
    <property type="match status" value="1"/>
</dbReference>
<dbReference type="PANTHER" id="PTHR43394:SF1">
    <property type="entry name" value="ATP-BINDING CASSETTE SUB-FAMILY B MEMBER 10, MITOCHONDRIAL"/>
    <property type="match status" value="1"/>
</dbReference>
<dbReference type="PANTHER" id="PTHR43394">
    <property type="entry name" value="ATP-DEPENDENT PERMEASE MDL1, MITOCHONDRIAL"/>
    <property type="match status" value="1"/>
</dbReference>
<dbReference type="Pfam" id="PF00664">
    <property type="entry name" value="ABC_membrane"/>
    <property type="match status" value="1"/>
</dbReference>
<dbReference type="Pfam" id="PF00005">
    <property type="entry name" value="ABC_tran"/>
    <property type="match status" value="1"/>
</dbReference>
<dbReference type="SMART" id="SM00382">
    <property type="entry name" value="AAA"/>
    <property type="match status" value="1"/>
</dbReference>
<dbReference type="SUPFAM" id="SSF90123">
    <property type="entry name" value="ABC transporter transmembrane region"/>
    <property type="match status" value="1"/>
</dbReference>
<dbReference type="SUPFAM" id="SSF52540">
    <property type="entry name" value="P-loop containing nucleoside triphosphate hydrolases"/>
    <property type="match status" value="1"/>
</dbReference>
<dbReference type="PROSITE" id="PS50929">
    <property type="entry name" value="ABC_TM1F"/>
    <property type="match status" value="1"/>
</dbReference>
<dbReference type="PROSITE" id="PS00211">
    <property type="entry name" value="ABC_TRANSPORTER_1"/>
    <property type="match status" value="1"/>
</dbReference>
<dbReference type="PROSITE" id="PS50893">
    <property type="entry name" value="ABC_TRANSPORTER_2"/>
    <property type="match status" value="1"/>
</dbReference>
<dbReference type="PROSITE" id="PS51239">
    <property type="entry name" value="MSBA"/>
    <property type="match status" value="1"/>
</dbReference>
<organism>
    <name type="scientific">Xanthomonas axonopodis pv. citri (strain 306)</name>
    <dbReference type="NCBI Taxonomy" id="190486"/>
    <lineage>
        <taxon>Bacteria</taxon>
        <taxon>Pseudomonadati</taxon>
        <taxon>Pseudomonadota</taxon>
        <taxon>Gammaproteobacteria</taxon>
        <taxon>Lysobacterales</taxon>
        <taxon>Lysobacteraceae</taxon>
        <taxon>Xanthomonas</taxon>
    </lineage>
</organism>
<feature type="chain" id="PRO_0000092606" description="ATP-dependent lipid A-core flippase">
    <location>
        <begin position="1"/>
        <end position="589"/>
    </location>
</feature>
<feature type="transmembrane region" description="Helical" evidence="1">
    <location>
        <begin position="29"/>
        <end position="49"/>
    </location>
</feature>
<feature type="transmembrane region" description="Helical" evidence="1">
    <location>
        <begin position="70"/>
        <end position="90"/>
    </location>
</feature>
<feature type="transmembrane region" description="Helical" evidence="1">
    <location>
        <begin position="157"/>
        <end position="177"/>
    </location>
</feature>
<feature type="transmembrane region" description="Helical" evidence="1">
    <location>
        <begin position="261"/>
        <end position="281"/>
    </location>
</feature>
<feature type="transmembrane region" description="Helical" evidence="1">
    <location>
        <begin position="283"/>
        <end position="303"/>
    </location>
</feature>
<feature type="domain" description="ABC transmembrane type-1" evidence="1">
    <location>
        <begin position="32"/>
        <end position="314"/>
    </location>
</feature>
<feature type="domain" description="ABC transporter" evidence="1">
    <location>
        <begin position="346"/>
        <end position="582"/>
    </location>
</feature>
<feature type="binding site" evidence="1">
    <location>
        <begin position="380"/>
        <end position="387"/>
    </location>
    <ligand>
        <name>ATP</name>
        <dbReference type="ChEBI" id="CHEBI:30616"/>
    </ligand>
</feature>
<comment type="function">
    <text evidence="1">Involved in lipopolysaccharide (LPS) biosynthesis. Translocates lipid A-core from the inner to the outer leaflet of the inner membrane. Transmembrane domains (TMD) form a pore in the inner membrane and the ATP-binding domain (NBD) is responsible for energy generation.</text>
</comment>
<comment type="catalytic activity">
    <reaction evidence="1">
        <text>ATP + H2O + lipid A-core oligosaccharideSide 1 = ADP + phosphate + lipid A-core oligosaccharideSide 2.</text>
        <dbReference type="EC" id="7.5.2.6"/>
    </reaction>
</comment>
<comment type="subunit">
    <text evidence="1">Homodimer.</text>
</comment>
<comment type="subcellular location">
    <subcellularLocation>
        <location evidence="1">Cell inner membrane</location>
        <topology evidence="1">Multi-pass membrane protein</topology>
    </subcellularLocation>
</comment>
<comment type="domain">
    <text evidence="1">In MsbA the ATP-binding domain (NBD) and the transmembrane domain (TMD) are fused.</text>
</comment>
<comment type="similarity">
    <text evidence="1">Belongs to the ABC transporter superfamily. Lipid exporter (TC 3.A.1.106) family.</text>
</comment>
<evidence type="ECO:0000255" key="1">
    <source>
        <dbReference type="HAMAP-Rule" id="MF_01703"/>
    </source>
</evidence>
<keyword id="KW-0067">ATP-binding</keyword>
<keyword id="KW-0997">Cell inner membrane</keyword>
<keyword id="KW-1003">Cell membrane</keyword>
<keyword id="KW-0445">Lipid transport</keyword>
<keyword id="KW-0472">Membrane</keyword>
<keyword id="KW-0547">Nucleotide-binding</keyword>
<keyword id="KW-1278">Translocase</keyword>
<keyword id="KW-0812">Transmembrane</keyword>
<keyword id="KW-1133">Transmembrane helix</keyword>
<keyword id="KW-0813">Transport</keyword>
<gene>
    <name evidence="1" type="primary">msbA</name>
    <name type="ordered locus">XAC2087</name>
</gene>
<proteinExistence type="inferred from homology"/>
<sequence>MTISIDRPAPVSSWRTYRRLLAFAKPYRLLLVAALIAALIEAAGTTGFLALMKPITDETFIYKNAEVSRWLPVQIILLFVVRGVAGYITDMAMGKSARSIARDLRIKVMAKYLRLPGSRFDSEPVPSMLIRLGSDSDQVAQAAVDAVKVMIQQSLQVIGALALMLWHSWQVTLTILVLAPVLAWVMDKVARRYRRISHSIQESGAQLLQAADQTLSSHQEVKIYGAQQTEMERYGALANRNLRLAMKVESTRGISTATVQMIGAIGLSALLFVAGAQALAGRLTAGDFVVLMTSMLTIIPGLKQLTNVQNMVQRGLASAERLFSVLDSPDEPDQGTVPLTRAKGLIEFRDVTARYPGQVNPALADVSFVAQPGTVTAIVGRSGSGKSSLIKLIPRFYEAEAGQILLDGHPVQAYALADLRRQIALVGQQVMLFDGSIADNVAFGEMRNADAGKLERAILGANAMEFVAQLPEGLQSHVGTKGGRLSGGQRQRLAIARAMLKDAPVLILDEATAALDNESERLVQDALHKLMPDRTTLVIAHRLSTIEHADQVLVMDQGRIVERGTHHQLLAQGGLYSHLHGMQFRERQA</sequence>
<reference key="1">
    <citation type="journal article" date="2002" name="Nature">
        <title>Comparison of the genomes of two Xanthomonas pathogens with differing host specificities.</title>
        <authorList>
            <person name="da Silva A.C.R."/>
            <person name="Ferro J.A."/>
            <person name="Reinach F.C."/>
            <person name="Farah C.S."/>
            <person name="Furlan L.R."/>
            <person name="Quaggio R.B."/>
            <person name="Monteiro-Vitorello C.B."/>
            <person name="Van Sluys M.A."/>
            <person name="Almeida N.F. Jr."/>
            <person name="Alves L.M.C."/>
            <person name="do Amaral A.M."/>
            <person name="Bertolini M.C."/>
            <person name="Camargo L.E.A."/>
            <person name="Camarotte G."/>
            <person name="Cannavan F."/>
            <person name="Cardozo J."/>
            <person name="Chambergo F."/>
            <person name="Ciapina L.P."/>
            <person name="Cicarelli R.M.B."/>
            <person name="Coutinho L.L."/>
            <person name="Cursino-Santos J.R."/>
            <person name="El-Dorry H."/>
            <person name="Faria J.B."/>
            <person name="Ferreira A.J.S."/>
            <person name="Ferreira R.C.C."/>
            <person name="Ferro M.I.T."/>
            <person name="Formighieri E.F."/>
            <person name="Franco M.C."/>
            <person name="Greggio C.C."/>
            <person name="Gruber A."/>
            <person name="Katsuyama A.M."/>
            <person name="Kishi L.T."/>
            <person name="Leite R.P."/>
            <person name="Lemos E.G.M."/>
            <person name="Lemos M.V.F."/>
            <person name="Locali E.C."/>
            <person name="Machado M.A."/>
            <person name="Madeira A.M.B.N."/>
            <person name="Martinez-Rossi N.M."/>
            <person name="Martins E.C."/>
            <person name="Meidanis J."/>
            <person name="Menck C.F.M."/>
            <person name="Miyaki C.Y."/>
            <person name="Moon D.H."/>
            <person name="Moreira L.M."/>
            <person name="Novo M.T.M."/>
            <person name="Okura V.K."/>
            <person name="Oliveira M.C."/>
            <person name="Oliveira V.R."/>
            <person name="Pereira H.A."/>
            <person name="Rossi A."/>
            <person name="Sena J.A.D."/>
            <person name="Silva C."/>
            <person name="de Souza R.F."/>
            <person name="Spinola L.A.F."/>
            <person name="Takita M.A."/>
            <person name="Tamura R.E."/>
            <person name="Teixeira E.C."/>
            <person name="Tezza R.I.D."/>
            <person name="Trindade dos Santos M."/>
            <person name="Truffi D."/>
            <person name="Tsai S.M."/>
            <person name="White F.F."/>
            <person name="Setubal J.C."/>
            <person name="Kitajima J.P."/>
        </authorList>
    </citation>
    <scope>NUCLEOTIDE SEQUENCE [LARGE SCALE GENOMIC DNA]</scope>
    <source>
        <strain>306</strain>
    </source>
</reference>